<protein>
    <recommendedName>
        <fullName evidence="1">1-deoxy-D-xylulose-5-phosphate synthase</fullName>
        <ecNumber evidence="1">2.2.1.7</ecNumber>
    </recommendedName>
    <alternativeName>
        <fullName evidence="1">1-deoxyxylulose-5-phosphate synthase</fullName>
        <shortName evidence="1">DXP synthase</shortName>
        <shortName evidence="1">DXPS</shortName>
    </alternativeName>
</protein>
<dbReference type="EC" id="2.2.1.7" evidence="1"/>
<dbReference type="EMBL" id="CP000563">
    <property type="protein sequence ID" value="ABN60875.1"/>
    <property type="molecule type" value="Genomic_DNA"/>
</dbReference>
<dbReference type="RefSeq" id="WP_011846282.1">
    <property type="nucleotide sequence ID" value="NC_009052.1"/>
</dbReference>
<dbReference type="SMR" id="A3D2B2"/>
<dbReference type="STRING" id="325240.Sbal_1357"/>
<dbReference type="KEGG" id="sbl:Sbal_1357"/>
<dbReference type="HOGENOM" id="CLU_009227_1_4_6"/>
<dbReference type="OrthoDB" id="9803371at2"/>
<dbReference type="UniPathway" id="UPA00064">
    <property type="reaction ID" value="UER00091"/>
</dbReference>
<dbReference type="Proteomes" id="UP000001557">
    <property type="component" value="Chromosome"/>
</dbReference>
<dbReference type="GO" id="GO:0005829">
    <property type="term" value="C:cytosol"/>
    <property type="evidence" value="ECO:0007669"/>
    <property type="project" value="TreeGrafter"/>
</dbReference>
<dbReference type="GO" id="GO:0008661">
    <property type="term" value="F:1-deoxy-D-xylulose-5-phosphate synthase activity"/>
    <property type="evidence" value="ECO:0007669"/>
    <property type="project" value="UniProtKB-UniRule"/>
</dbReference>
<dbReference type="GO" id="GO:0000287">
    <property type="term" value="F:magnesium ion binding"/>
    <property type="evidence" value="ECO:0007669"/>
    <property type="project" value="UniProtKB-UniRule"/>
</dbReference>
<dbReference type="GO" id="GO:0030976">
    <property type="term" value="F:thiamine pyrophosphate binding"/>
    <property type="evidence" value="ECO:0007669"/>
    <property type="project" value="UniProtKB-UniRule"/>
</dbReference>
<dbReference type="GO" id="GO:0052865">
    <property type="term" value="P:1-deoxy-D-xylulose 5-phosphate biosynthetic process"/>
    <property type="evidence" value="ECO:0007669"/>
    <property type="project" value="UniProtKB-UniPathway"/>
</dbReference>
<dbReference type="GO" id="GO:0019288">
    <property type="term" value="P:isopentenyl diphosphate biosynthetic process, methylerythritol 4-phosphate pathway"/>
    <property type="evidence" value="ECO:0007669"/>
    <property type="project" value="TreeGrafter"/>
</dbReference>
<dbReference type="GO" id="GO:0016114">
    <property type="term" value="P:terpenoid biosynthetic process"/>
    <property type="evidence" value="ECO:0007669"/>
    <property type="project" value="UniProtKB-UniRule"/>
</dbReference>
<dbReference type="GO" id="GO:0009228">
    <property type="term" value="P:thiamine biosynthetic process"/>
    <property type="evidence" value="ECO:0007669"/>
    <property type="project" value="UniProtKB-UniRule"/>
</dbReference>
<dbReference type="CDD" id="cd02007">
    <property type="entry name" value="TPP_DXS"/>
    <property type="match status" value="1"/>
</dbReference>
<dbReference type="CDD" id="cd07033">
    <property type="entry name" value="TPP_PYR_DXS_TK_like"/>
    <property type="match status" value="1"/>
</dbReference>
<dbReference type="FunFam" id="3.40.50.920:FF:000002">
    <property type="entry name" value="1-deoxy-D-xylulose-5-phosphate synthase"/>
    <property type="match status" value="1"/>
</dbReference>
<dbReference type="FunFam" id="3.40.50.970:FF:000005">
    <property type="entry name" value="1-deoxy-D-xylulose-5-phosphate synthase"/>
    <property type="match status" value="1"/>
</dbReference>
<dbReference type="Gene3D" id="3.40.50.920">
    <property type="match status" value="1"/>
</dbReference>
<dbReference type="Gene3D" id="3.40.50.970">
    <property type="match status" value="2"/>
</dbReference>
<dbReference type="HAMAP" id="MF_00315">
    <property type="entry name" value="DXP_synth"/>
    <property type="match status" value="1"/>
</dbReference>
<dbReference type="InterPro" id="IPR005477">
    <property type="entry name" value="Dxylulose-5-P_synthase"/>
</dbReference>
<dbReference type="InterPro" id="IPR029061">
    <property type="entry name" value="THDP-binding"/>
</dbReference>
<dbReference type="InterPro" id="IPR009014">
    <property type="entry name" value="Transketo_C/PFOR_II"/>
</dbReference>
<dbReference type="InterPro" id="IPR005475">
    <property type="entry name" value="Transketolase-like_Pyr-bd"/>
</dbReference>
<dbReference type="InterPro" id="IPR020826">
    <property type="entry name" value="Transketolase_BS"/>
</dbReference>
<dbReference type="InterPro" id="IPR033248">
    <property type="entry name" value="Transketolase_C"/>
</dbReference>
<dbReference type="InterPro" id="IPR049557">
    <property type="entry name" value="Transketolase_CS"/>
</dbReference>
<dbReference type="NCBIfam" id="TIGR00204">
    <property type="entry name" value="dxs"/>
    <property type="match status" value="1"/>
</dbReference>
<dbReference type="NCBIfam" id="NF003933">
    <property type="entry name" value="PRK05444.2-2"/>
    <property type="match status" value="1"/>
</dbReference>
<dbReference type="PANTHER" id="PTHR43322">
    <property type="entry name" value="1-D-DEOXYXYLULOSE 5-PHOSPHATE SYNTHASE-RELATED"/>
    <property type="match status" value="1"/>
</dbReference>
<dbReference type="PANTHER" id="PTHR43322:SF5">
    <property type="entry name" value="1-DEOXY-D-XYLULOSE-5-PHOSPHATE SYNTHASE, CHLOROPLASTIC"/>
    <property type="match status" value="1"/>
</dbReference>
<dbReference type="Pfam" id="PF13292">
    <property type="entry name" value="DXP_synthase_N"/>
    <property type="match status" value="1"/>
</dbReference>
<dbReference type="Pfam" id="PF02779">
    <property type="entry name" value="Transket_pyr"/>
    <property type="match status" value="1"/>
</dbReference>
<dbReference type="Pfam" id="PF02780">
    <property type="entry name" value="Transketolase_C"/>
    <property type="match status" value="1"/>
</dbReference>
<dbReference type="SMART" id="SM00861">
    <property type="entry name" value="Transket_pyr"/>
    <property type="match status" value="1"/>
</dbReference>
<dbReference type="SUPFAM" id="SSF52518">
    <property type="entry name" value="Thiamin diphosphate-binding fold (THDP-binding)"/>
    <property type="match status" value="2"/>
</dbReference>
<dbReference type="SUPFAM" id="SSF52922">
    <property type="entry name" value="TK C-terminal domain-like"/>
    <property type="match status" value="1"/>
</dbReference>
<dbReference type="PROSITE" id="PS00801">
    <property type="entry name" value="TRANSKETOLASE_1"/>
    <property type="match status" value="1"/>
</dbReference>
<dbReference type="PROSITE" id="PS00802">
    <property type="entry name" value="TRANSKETOLASE_2"/>
    <property type="match status" value="1"/>
</dbReference>
<name>DXS_SHEB5</name>
<reference key="1">
    <citation type="submission" date="2007-02" db="EMBL/GenBank/DDBJ databases">
        <title>Complete sequence of chromosome of Shewanella baltica OS155.</title>
        <authorList>
            <consortium name="US DOE Joint Genome Institute"/>
            <person name="Copeland A."/>
            <person name="Lucas S."/>
            <person name="Lapidus A."/>
            <person name="Barry K."/>
            <person name="Detter J.C."/>
            <person name="Glavina del Rio T."/>
            <person name="Hammon N."/>
            <person name="Israni S."/>
            <person name="Dalin E."/>
            <person name="Tice H."/>
            <person name="Pitluck S."/>
            <person name="Sims D.R."/>
            <person name="Brettin T."/>
            <person name="Bruce D."/>
            <person name="Han C."/>
            <person name="Tapia R."/>
            <person name="Brainard J."/>
            <person name="Schmutz J."/>
            <person name="Larimer F."/>
            <person name="Land M."/>
            <person name="Hauser L."/>
            <person name="Kyrpides N."/>
            <person name="Mikhailova N."/>
            <person name="Brettar I."/>
            <person name="Klappenbach J."/>
            <person name="Konstantinidis K."/>
            <person name="Rodrigues J."/>
            <person name="Tiedje J."/>
            <person name="Richardson P."/>
        </authorList>
    </citation>
    <scope>NUCLEOTIDE SEQUENCE [LARGE SCALE GENOMIC DNA]</scope>
    <source>
        <strain>OS155 / ATCC BAA-1091</strain>
    </source>
</reference>
<proteinExistence type="inferred from homology"/>
<accession>A3D2B2</accession>
<keyword id="KW-0414">Isoprene biosynthesis</keyword>
<keyword id="KW-0460">Magnesium</keyword>
<keyword id="KW-0479">Metal-binding</keyword>
<keyword id="KW-1185">Reference proteome</keyword>
<keyword id="KW-0784">Thiamine biosynthesis</keyword>
<keyword id="KW-0786">Thiamine pyrophosphate</keyword>
<keyword id="KW-0808">Transferase</keyword>
<evidence type="ECO:0000255" key="1">
    <source>
        <dbReference type="HAMAP-Rule" id="MF_00315"/>
    </source>
</evidence>
<gene>
    <name evidence="1" type="primary">dxs</name>
    <name type="ordered locus">Sbal_1357</name>
</gene>
<comment type="function">
    <text evidence="1">Catalyzes the acyloin condensation reaction between C atoms 2 and 3 of pyruvate and glyceraldehyde 3-phosphate to yield 1-deoxy-D-xylulose-5-phosphate (DXP).</text>
</comment>
<comment type="catalytic activity">
    <reaction evidence="1">
        <text>D-glyceraldehyde 3-phosphate + pyruvate + H(+) = 1-deoxy-D-xylulose 5-phosphate + CO2</text>
        <dbReference type="Rhea" id="RHEA:12605"/>
        <dbReference type="ChEBI" id="CHEBI:15361"/>
        <dbReference type="ChEBI" id="CHEBI:15378"/>
        <dbReference type="ChEBI" id="CHEBI:16526"/>
        <dbReference type="ChEBI" id="CHEBI:57792"/>
        <dbReference type="ChEBI" id="CHEBI:59776"/>
        <dbReference type="EC" id="2.2.1.7"/>
    </reaction>
</comment>
<comment type="cofactor">
    <cofactor evidence="1">
        <name>Mg(2+)</name>
        <dbReference type="ChEBI" id="CHEBI:18420"/>
    </cofactor>
    <text evidence="1">Binds 1 Mg(2+) ion per subunit.</text>
</comment>
<comment type="cofactor">
    <cofactor evidence="1">
        <name>thiamine diphosphate</name>
        <dbReference type="ChEBI" id="CHEBI:58937"/>
    </cofactor>
    <text evidence="1">Binds 1 thiamine pyrophosphate per subunit.</text>
</comment>
<comment type="pathway">
    <text evidence="1">Metabolic intermediate biosynthesis; 1-deoxy-D-xylulose 5-phosphate biosynthesis; 1-deoxy-D-xylulose 5-phosphate from D-glyceraldehyde 3-phosphate and pyruvate: step 1/1.</text>
</comment>
<comment type="subunit">
    <text evidence="1">Homodimer.</text>
</comment>
<comment type="similarity">
    <text evidence="1">Belongs to the transketolase family. DXPS subfamily.</text>
</comment>
<feature type="chain" id="PRO_1000019073" description="1-deoxy-D-xylulose-5-phosphate synthase">
    <location>
        <begin position="1"/>
        <end position="622"/>
    </location>
</feature>
<feature type="binding site" evidence="1">
    <location>
        <position position="80"/>
    </location>
    <ligand>
        <name>thiamine diphosphate</name>
        <dbReference type="ChEBI" id="CHEBI:58937"/>
    </ligand>
</feature>
<feature type="binding site" evidence="1">
    <location>
        <begin position="121"/>
        <end position="123"/>
    </location>
    <ligand>
        <name>thiamine diphosphate</name>
        <dbReference type="ChEBI" id="CHEBI:58937"/>
    </ligand>
</feature>
<feature type="binding site" evidence="1">
    <location>
        <position position="152"/>
    </location>
    <ligand>
        <name>Mg(2+)</name>
        <dbReference type="ChEBI" id="CHEBI:18420"/>
    </ligand>
</feature>
<feature type="binding site" evidence="1">
    <location>
        <begin position="153"/>
        <end position="154"/>
    </location>
    <ligand>
        <name>thiamine diphosphate</name>
        <dbReference type="ChEBI" id="CHEBI:58937"/>
    </ligand>
</feature>
<feature type="binding site" evidence="1">
    <location>
        <position position="181"/>
    </location>
    <ligand>
        <name>Mg(2+)</name>
        <dbReference type="ChEBI" id="CHEBI:18420"/>
    </ligand>
</feature>
<feature type="binding site" evidence="1">
    <location>
        <position position="181"/>
    </location>
    <ligand>
        <name>thiamine diphosphate</name>
        <dbReference type="ChEBI" id="CHEBI:58937"/>
    </ligand>
</feature>
<feature type="binding site" evidence="1">
    <location>
        <position position="288"/>
    </location>
    <ligand>
        <name>thiamine diphosphate</name>
        <dbReference type="ChEBI" id="CHEBI:58937"/>
    </ligand>
</feature>
<feature type="binding site" evidence="1">
    <location>
        <position position="370"/>
    </location>
    <ligand>
        <name>thiamine diphosphate</name>
        <dbReference type="ChEBI" id="CHEBI:58937"/>
    </ligand>
</feature>
<organism>
    <name type="scientific">Shewanella baltica (strain OS155 / ATCC BAA-1091)</name>
    <dbReference type="NCBI Taxonomy" id="325240"/>
    <lineage>
        <taxon>Bacteria</taxon>
        <taxon>Pseudomonadati</taxon>
        <taxon>Pseudomonadota</taxon>
        <taxon>Gammaproteobacteria</taxon>
        <taxon>Alteromonadales</taxon>
        <taxon>Shewanellaceae</taxon>
        <taxon>Shewanella</taxon>
    </lineage>
</organism>
<sequence>MSLDISQFPVLAQANTPNELRQLPQALLPQVADELREFLLKSVGISSGHFASGLGTVELTVALHYVYNTPFDRLIWDVGHQAYPHKILTGRRDKMHTIRQKDGLHPFPWREESEYDTFSVGHSGTSISAALAMAIAAEKEQAGRKVVAVIGDGAMTGGMVFEAMNHAGDLHNDMLVVLNDNEMSISENVGALNNHLAQLMSGRFYTTLREGGKKVLKGMPVIKEMAKRTEEHLKGMVVPGTLFEELGFNYIGPIDGHDVDALVETMRNMRNLKGPQVLHIMTKKGRGYEPAEKDPIGWHAVPKFDPSLFKKPTTKPGLPTFSQVFGKWLCDIAEQDEKVLAITPAMREGSGMVEFSQRFPKQYFDAAIAEQHAVTLSAGFACEGFKPVVAIYSTFLQRAYDQLIHDVALQKLPVLFAIDRGGIVGADGPTHQGAFDLSFMRCIPNMVIMAPSDENECRQMLYTGYCYDAGPSAVRYPRGCATGATQVEAMTALPIGKGVIKRVGKRIAILNFGTLLASALTAAESLDATVVDMRFVKPLDVDLVKEMAQTHEVLVTVEENAIMGGAGAGVLEQLQKLRMPKAVLQIGLPDEFIKHGSPEEVTHDLQLDAEGILAQINAYLAQ</sequence>